<reference key="1">
    <citation type="submission" date="2006-12" db="EMBL/GenBank/DDBJ databases">
        <title>Complete sequence of Shewanella sp. W3-18-1.</title>
        <authorList>
            <consortium name="US DOE Joint Genome Institute"/>
            <person name="Copeland A."/>
            <person name="Lucas S."/>
            <person name="Lapidus A."/>
            <person name="Barry K."/>
            <person name="Detter J.C."/>
            <person name="Glavina del Rio T."/>
            <person name="Hammon N."/>
            <person name="Israni S."/>
            <person name="Dalin E."/>
            <person name="Tice H."/>
            <person name="Pitluck S."/>
            <person name="Chain P."/>
            <person name="Malfatti S."/>
            <person name="Shin M."/>
            <person name="Vergez L."/>
            <person name="Schmutz J."/>
            <person name="Larimer F."/>
            <person name="Land M."/>
            <person name="Hauser L."/>
            <person name="Kyrpides N."/>
            <person name="Lykidis A."/>
            <person name="Tiedje J."/>
            <person name="Richardson P."/>
        </authorList>
    </citation>
    <scope>NUCLEOTIDE SEQUENCE [LARGE SCALE GENOMIC DNA]</scope>
    <source>
        <strain>W3-18-1</strain>
    </source>
</reference>
<feature type="chain" id="PRO_1000001342" description="LexA repressor">
    <location>
        <begin position="1"/>
        <end position="206"/>
    </location>
</feature>
<feature type="DNA-binding region" description="H-T-H motif" evidence="1">
    <location>
        <begin position="28"/>
        <end position="48"/>
    </location>
</feature>
<feature type="active site" description="For autocatalytic cleavage activity" evidence="1">
    <location>
        <position position="123"/>
    </location>
</feature>
<feature type="active site" description="For autocatalytic cleavage activity" evidence="1">
    <location>
        <position position="160"/>
    </location>
</feature>
<feature type="site" description="Cleavage; by autolysis" evidence="1">
    <location>
        <begin position="88"/>
        <end position="89"/>
    </location>
</feature>
<evidence type="ECO:0000255" key="1">
    <source>
        <dbReference type="HAMAP-Rule" id="MF_00015"/>
    </source>
</evidence>
<dbReference type="EC" id="3.4.21.88" evidence="1"/>
<dbReference type="EMBL" id="CP000503">
    <property type="protein sequence ID" value="ABM22988.1"/>
    <property type="molecule type" value="Genomic_DNA"/>
</dbReference>
<dbReference type="RefSeq" id="WP_011787555.1">
    <property type="nucleotide sequence ID" value="NC_008750.1"/>
</dbReference>
<dbReference type="SMR" id="A1RE93"/>
<dbReference type="MEROPS" id="S24.001"/>
<dbReference type="GeneID" id="67441735"/>
<dbReference type="KEGG" id="shw:Sputw3181_0135"/>
<dbReference type="HOGENOM" id="CLU_066192_45_3_6"/>
<dbReference type="Proteomes" id="UP000002597">
    <property type="component" value="Chromosome"/>
</dbReference>
<dbReference type="GO" id="GO:0003677">
    <property type="term" value="F:DNA binding"/>
    <property type="evidence" value="ECO:0007669"/>
    <property type="project" value="UniProtKB-UniRule"/>
</dbReference>
<dbReference type="GO" id="GO:0004252">
    <property type="term" value="F:serine-type endopeptidase activity"/>
    <property type="evidence" value="ECO:0007669"/>
    <property type="project" value="UniProtKB-UniRule"/>
</dbReference>
<dbReference type="GO" id="GO:0006281">
    <property type="term" value="P:DNA repair"/>
    <property type="evidence" value="ECO:0007669"/>
    <property type="project" value="UniProtKB-UniRule"/>
</dbReference>
<dbReference type="GO" id="GO:0006260">
    <property type="term" value="P:DNA replication"/>
    <property type="evidence" value="ECO:0007669"/>
    <property type="project" value="UniProtKB-UniRule"/>
</dbReference>
<dbReference type="GO" id="GO:0045892">
    <property type="term" value="P:negative regulation of DNA-templated transcription"/>
    <property type="evidence" value="ECO:0007669"/>
    <property type="project" value="UniProtKB-UniRule"/>
</dbReference>
<dbReference type="GO" id="GO:0006508">
    <property type="term" value="P:proteolysis"/>
    <property type="evidence" value="ECO:0007669"/>
    <property type="project" value="InterPro"/>
</dbReference>
<dbReference type="GO" id="GO:0009432">
    <property type="term" value="P:SOS response"/>
    <property type="evidence" value="ECO:0007669"/>
    <property type="project" value="UniProtKB-UniRule"/>
</dbReference>
<dbReference type="CDD" id="cd06529">
    <property type="entry name" value="S24_LexA-like"/>
    <property type="match status" value="1"/>
</dbReference>
<dbReference type="FunFam" id="1.10.10.10:FF:000009">
    <property type="entry name" value="LexA repressor"/>
    <property type="match status" value="1"/>
</dbReference>
<dbReference type="FunFam" id="2.10.109.10:FF:000001">
    <property type="entry name" value="LexA repressor"/>
    <property type="match status" value="1"/>
</dbReference>
<dbReference type="Gene3D" id="2.10.109.10">
    <property type="entry name" value="Umud Fragment, subunit A"/>
    <property type="match status" value="1"/>
</dbReference>
<dbReference type="Gene3D" id="1.10.10.10">
    <property type="entry name" value="Winged helix-like DNA-binding domain superfamily/Winged helix DNA-binding domain"/>
    <property type="match status" value="1"/>
</dbReference>
<dbReference type="HAMAP" id="MF_00015">
    <property type="entry name" value="LexA"/>
    <property type="match status" value="1"/>
</dbReference>
<dbReference type="InterPro" id="IPR006200">
    <property type="entry name" value="LexA"/>
</dbReference>
<dbReference type="InterPro" id="IPR039418">
    <property type="entry name" value="LexA-like"/>
</dbReference>
<dbReference type="InterPro" id="IPR036286">
    <property type="entry name" value="LexA/Signal_pep-like_sf"/>
</dbReference>
<dbReference type="InterPro" id="IPR006199">
    <property type="entry name" value="LexA_DNA-bd_dom"/>
</dbReference>
<dbReference type="InterPro" id="IPR050077">
    <property type="entry name" value="LexA_repressor"/>
</dbReference>
<dbReference type="InterPro" id="IPR006197">
    <property type="entry name" value="Peptidase_S24_LexA"/>
</dbReference>
<dbReference type="InterPro" id="IPR015927">
    <property type="entry name" value="Peptidase_S24_S26A/B/C"/>
</dbReference>
<dbReference type="InterPro" id="IPR036388">
    <property type="entry name" value="WH-like_DNA-bd_sf"/>
</dbReference>
<dbReference type="InterPro" id="IPR036390">
    <property type="entry name" value="WH_DNA-bd_sf"/>
</dbReference>
<dbReference type="NCBIfam" id="TIGR00498">
    <property type="entry name" value="lexA"/>
    <property type="match status" value="1"/>
</dbReference>
<dbReference type="PANTHER" id="PTHR33516">
    <property type="entry name" value="LEXA REPRESSOR"/>
    <property type="match status" value="1"/>
</dbReference>
<dbReference type="PANTHER" id="PTHR33516:SF2">
    <property type="entry name" value="LEXA REPRESSOR-RELATED"/>
    <property type="match status" value="1"/>
</dbReference>
<dbReference type="Pfam" id="PF01726">
    <property type="entry name" value="LexA_DNA_bind"/>
    <property type="match status" value="1"/>
</dbReference>
<dbReference type="Pfam" id="PF00717">
    <property type="entry name" value="Peptidase_S24"/>
    <property type="match status" value="1"/>
</dbReference>
<dbReference type="PRINTS" id="PR00726">
    <property type="entry name" value="LEXASERPTASE"/>
</dbReference>
<dbReference type="SUPFAM" id="SSF51306">
    <property type="entry name" value="LexA/Signal peptidase"/>
    <property type="match status" value="1"/>
</dbReference>
<dbReference type="SUPFAM" id="SSF46785">
    <property type="entry name" value="Winged helix' DNA-binding domain"/>
    <property type="match status" value="1"/>
</dbReference>
<proteinExistence type="inferred from homology"/>
<sequence>MRPLTPRQAEILELIKRNIADTGMPPTRAEIATRLGFKSANAAEEHLKALAKKGCIEIMPGTSRGIRLPAEEEVVVEYGLPLIGQVAAGEPILAQEHVEQYYQVDPSMFHPTADFLLRVKGDSMKNIGILEGDLLAVHKVQQARNGQVVVARVDDDVTVKRFEKKGNLVYLYAENEDYSPIKVDLSCQSLTIEGLAVGVIRNGDWL</sequence>
<name>LEXA_SHESW</name>
<protein>
    <recommendedName>
        <fullName evidence="1">LexA repressor</fullName>
        <ecNumber evidence="1">3.4.21.88</ecNumber>
    </recommendedName>
</protein>
<gene>
    <name evidence="1" type="primary">lexA</name>
    <name type="ordered locus">Sputw3181_0135</name>
</gene>
<accession>A1RE93</accession>
<keyword id="KW-0068">Autocatalytic cleavage</keyword>
<keyword id="KW-0227">DNA damage</keyword>
<keyword id="KW-0234">DNA repair</keyword>
<keyword id="KW-0235">DNA replication</keyword>
<keyword id="KW-0238">DNA-binding</keyword>
<keyword id="KW-0378">Hydrolase</keyword>
<keyword id="KW-0678">Repressor</keyword>
<keyword id="KW-0742">SOS response</keyword>
<keyword id="KW-0804">Transcription</keyword>
<keyword id="KW-0805">Transcription regulation</keyword>
<comment type="function">
    <text evidence="1">Represses a number of genes involved in the response to DNA damage (SOS response), including recA and lexA. In the presence of single-stranded DNA, RecA interacts with LexA causing an autocatalytic cleavage which disrupts the DNA-binding part of LexA, leading to derepression of the SOS regulon and eventually DNA repair.</text>
</comment>
<comment type="catalytic activity">
    <reaction evidence="1">
        <text>Hydrolysis of Ala-|-Gly bond in repressor LexA.</text>
        <dbReference type="EC" id="3.4.21.88"/>
    </reaction>
</comment>
<comment type="subunit">
    <text evidence="1">Homodimer.</text>
</comment>
<comment type="similarity">
    <text evidence="1">Belongs to the peptidase S24 family.</text>
</comment>
<organism>
    <name type="scientific">Shewanella sp. (strain W3-18-1)</name>
    <dbReference type="NCBI Taxonomy" id="351745"/>
    <lineage>
        <taxon>Bacteria</taxon>
        <taxon>Pseudomonadati</taxon>
        <taxon>Pseudomonadota</taxon>
        <taxon>Gammaproteobacteria</taxon>
        <taxon>Alteromonadales</taxon>
        <taxon>Shewanellaceae</taxon>
        <taxon>Shewanella</taxon>
    </lineage>
</organism>